<accession>P01134</accession>
<accession>Q63749</accession>
<feature type="signal peptide" evidence="2">
    <location>
        <begin position="1"/>
        <end position="23"/>
    </location>
</feature>
<feature type="chain" id="PRO_0000302748" description="Protransforming growth factor alpha">
    <location>
        <begin position="24"/>
        <end position="159"/>
    </location>
</feature>
<feature type="propeptide" id="PRO_0000007764" description="Removed in mature form">
    <location>
        <begin position="24"/>
        <end position="38"/>
    </location>
</feature>
<feature type="chain" id="PRO_0000007765" description="Transforming growth factor alpha">
    <location>
        <begin position="39"/>
        <end position="88"/>
    </location>
</feature>
<feature type="propeptide" id="PRO_0000007766" description="Removed in mature form">
    <location>
        <begin position="89"/>
        <end position="159"/>
    </location>
</feature>
<feature type="topological domain" description="Extracellular" evidence="2">
    <location>
        <begin position="24"/>
        <end position="97"/>
    </location>
</feature>
<feature type="transmembrane region" description="Helical" evidence="2">
    <location>
        <begin position="98"/>
        <end position="123"/>
    </location>
</feature>
<feature type="topological domain" description="Cytoplasmic" evidence="2">
    <location>
        <begin position="124"/>
        <end position="159"/>
    </location>
</feature>
<feature type="domain" description="EGF-like" evidence="3">
    <location>
        <begin position="42"/>
        <end position="82"/>
    </location>
</feature>
<feature type="lipid moiety-binding region" description="S-palmitoyl cysteine" evidence="1">
    <location>
        <position position="152"/>
    </location>
</feature>
<feature type="lipid moiety-binding region" description="S-palmitoyl cysteine" evidence="1">
    <location>
        <position position="153"/>
    </location>
</feature>
<feature type="glycosylation site" description="N-linked (GlcNAc...) asparagine" evidence="2">
    <location>
        <position position="25"/>
    </location>
</feature>
<feature type="disulfide bond" evidence="3">
    <location>
        <begin position="46"/>
        <end position="59"/>
    </location>
</feature>
<feature type="disulfide bond" evidence="3">
    <location>
        <begin position="54"/>
        <end position="70"/>
    </location>
</feature>
<feature type="disulfide bond" evidence="3">
    <location>
        <begin position="72"/>
        <end position="81"/>
    </location>
</feature>
<feature type="sequence conflict" description="In Ref. 1; CAA26036." evidence="4" ref="1">
    <original>S</original>
    <variation>P</variation>
    <location>
        <position position="28"/>
    </location>
</feature>
<comment type="function">
    <text>TGF alpha is a mitogenic polypeptide that is able to bind to the EGF receptor/EGFR and to act synergistically with TGF beta to promote anchorage-independent cell proliferation in soft agar.</text>
</comment>
<comment type="subunit">
    <text evidence="1">Interacts with the PDZ domains of MAGI3, SDCBP and SNTA1. The interaction with SDCBP, is required for the targeting to the cell surface. In the endoplasmic reticulum, in its immature form (i.e. with a prosegment and lacking full N-glycosylation), interacts with CNIH. In the Golgi apparatus, may form a complex with CNIH and GORASP2. Interacts (via cytoplasmic C-terminal domain) with NKD2 (By similarity).</text>
</comment>
<comment type="interaction">
    <interactant intactId="EBI-16418721">
        <id>P01134</id>
    </interactant>
    <interactant intactId="EBI-742426">
        <id>Q9H190</id>
        <label>SDCBP2</label>
    </interactant>
    <organismsDiffer>true</organismsDiffer>
    <experiments>6</experiments>
</comment>
<comment type="subcellular location">
    <molecule>Transforming growth factor alpha</molecule>
    <subcellularLocation>
        <location>Secreted</location>
        <location>Extracellular space</location>
    </subcellularLocation>
</comment>
<comment type="subcellular location">
    <molecule>Protransforming growth factor alpha</molecule>
    <subcellularLocation>
        <location>Cell membrane</location>
        <topology>Single-pass type I membrane protein</topology>
    </subcellularLocation>
</comment>
<gene>
    <name type="primary">Tgfa</name>
</gene>
<dbReference type="EMBL" id="X02004">
    <property type="protein sequence ID" value="CAA26036.1"/>
    <property type="molecule type" value="mRNA"/>
</dbReference>
<dbReference type="EMBL" id="M31075">
    <property type="protein sequence ID" value="AAA42234.1"/>
    <property type="molecule type" value="Genomic_DNA"/>
</dbReference>
<dbReference type="EMBL" id="M31076">
    <property type="protein sequence ID" value="AAA42233.1"/>
    <property type="molecule type" value="mRNA"/>
</dbReference>
<dbReference type="PIR" id="A93356">
    <property type="entry name" value="WFRT1"/>
</dbReference>
<dbReference type="PIR" id="I57497">
    <property type="entry name" value="I57497"/>
</dbReference>
<dbReference type="RefSeq" id="NP_036803.1">
    <property type="nucleotide sequence ID" value="NM_012671.2"/>
</dbReference>
<dbReference type="SMR" id="P01134"/>
<dbReference type="FunCoup" id="P01134">
    <property type="interactions" value="598"/>
</dbReference>
<dbReference type="IntAct" id="P01134">
    <property type="interactions" value="2"/>
</dbReference>
<dbReference type="STRING" id="10116.ENSRNOP00000054248"/>
<dbReference type="GlyCosmos" id="P01134">
    <property type="glycosylation" value="1 site, No reported glycans"/>
</dbReference>
<dbReference type="GlyGen" id="P01134">
    <property type="glycosylation" value="1 site"/>
</dbReference>
<dbReference type="PaxDb" id="10116-ENSRNOP00000054248"/>
<dbReference type="GeneID" id="24827"/>
<dbReference type="KEGG" id="rno:24827"/>
<dbReference type="UCSC" id="RGD:3849">
    <property type="organism name" value="rat"/>
</dbReference>
<dbReference type="AGR" id="RGD:3849"/>
<dbReference type="CTD" id="7039"/>
<dbReference type="RGD" id="3849">
    <property type="gene designation" value="Tgfa"/>
</dbReference>
<dbReference type="VEuPathDB" id="HostDB:ENSRNOG00000016182"/>
<dbReference type="eggNOG" id="ENOG502RYAF">
    <property type="taxonomic scope" value="Eukaryota"/>
</dbReference>
<dbReference type="HOGENOM" id="CLU_109645_1_0_1"/>
<dbReference type="InParanoid" id="P01134"/>
<dbReference type="PhylomeDB" id="P01134"/>
<dbReference type="TreeFam" id="TF332938"/>
<dbReference type="Reactome" id="R-RNO-1257604">
    <property type="pathway name" value="PIP3 activates AKT signaling"/>
</dbReference>
<dbReference type="Reactome" id="R-RNO-177929">
    <property type="pathway name" value="Signaling by EGFR"/>
</dbReference>
<dbReference type="Reactome" id="R-RNO-179812">
    <property type="pathway name" value="GRB2 events in EGFR signaling"/>
</dbReference>
<dbReference type="Reactome" id="R-RNO-180292">
    <property type="pathway name" value="GAB1 signalosome"/>
</dbReference>
<dbReference type="Reactome" id="R-RNO-180336">
    <property type="pathway name" value="SHC1 events in EGFR signaling"/>
</dbReference>
<dbReference type="Reactome" id="R-RNO-182971">
    <property type="pathway name" value="EGFR downregulation"/>
</dbReference>
<dbReference type="Reactome" id="R-RNO-204005">
    <property type="pathway name" value="COPII-mediated vesicle transport"/>
</dbReference>
<dbReference type="Reactome" id="R-RNO-212718">
    <property type="pathway name" value="EGFR interacts with phospholipase C-gamma"/>
</dbReference>
<dbReference type="Reactome" id="R-RNO-5673001">
    <property type="pathway name" value="RAF/MAP kinase cascade"/>
</dbReference>
<dbReference type="Reactome" id="R-RNO-5694530">
    <property type="pathway name" value="Cargo concentration in the ER"/>
</dbReference>
<dbReference type="Reactome" id="R-RNO-6811558">
    <property type="pathway name" value="PI5P, PP2A and IER3 Regulate PI3K/AKT Signaling"/>
</dbReference>
<dbReference type="Reactome" id="R-RNO-8856825">
    <property type="pathway name" value="Cargo recognition for clathrin-mediated endocytosis"/>
</dbReference>
<dbReference type="Reactome" id="R-RNO-8856828">
    <property type="pathway name" value="Clathrin-mediated endocytosis"/>
</dbReference>
<dbReference type="Reactome" id="R-RNO-9009391">
    <property type="pathway name" value="Extra-nuclear estrogen signaling"/>
</dbReference>
<dbReference type="PRO" id="PR:P01134"/>
<dbReference type="Proteomes" id="UP000002494">
    <property type="component" value="Chromosome 4"/>
</dbReference>
<dbReference type="Bgee" id="ENSRNOG00000016182">
    <property type="expression patterns" value="Expressed in ovary and 15 other cell types or tissues"/>
</dbReference>
<dbReference type="GO" id="GO:0016323">
    <property type="term" value="C:basolateral plasma membrane"/>
    <property type="evidence" value="ECO:0000266"/>
    <property type="project" value="RGD"/>
</dbReference>
<dbReference type="GO" id="GO:0009986">
    <property type="term" value="C:cell surface"/>
    <property type="evidence" value="ECO:0000266"/>
    <property type="project" value="RGD"/>
</dbReference>
<dbReference type="GO" id="GO:0031410">
    <property type="term" value="C:cytoplasmic vesicle"/>
    <property type="evidence" value="ECO:0000266"/>
    <property type="project" value="RGD"/>
</dbReference>
<dbReference type="GO" id="GO:0005615">
    <property type="term" value="C:extracellular space"/>
    <property type="evidence" value="ECO:0000314"/>
    <property type="project" value="RGD"/>
</dbReference>
<dbReference type="GO" id="GO:0048471">
    <property type="term" value="C:perinuclear region of cytoplasm"/>
    <property type="evidence" value="ECO:0000266"/>
    <property type="project" value="RGD"/>
</dbReference>
<dbReference type="GO" id="GO:0005154">
    <property type="term" value="F:epidermal growth factor receptor binding"/>
    <property type="evidence" value="ECO:0000314"/>
    <property type="project" value="RGD"/>
</dbReference>
<dbReference type="GO" id="GO:0008083">
    <property type="term" value="F:growth factor activity"/>
    <property type="evidence" value="ECO:0000250"/>
    <property type="project" value="HGNC-UCL"/>
</dbReference>
<dbReference type="GO" id="GO:0048018">
    <property type="term" value="F:receptor ligand activity"/>
    <property type="evidence" value="ECO:0000266"/>
    <property type="project" value="RGD"/>
</dbReference>
<dbReference type="GO" id="GO:0030297">
    <property type="term" value="F:transmembrane receptor protein tyrosine kinase activator activity"/>
    <property type="evidence" value="ECO:0000266"/>
    <property type="project" value="RGD"/>
</dbReference>
<dbReference type="GO" id="GO:0001525">
    <property type="term" value="P:angiogenesis"/>
    <property type="evidence" value="ECO:0000266"/>
    <property type="project" value="RGD"/>
</dbReference>
<dbReference type="GO" id="GO:0007166">
    <property type="term" value="P:cell surface receptor signaling pathway"/>
    <property type="evidence" value="ECO:0000250"/>
    <property type="project" value="HGNC-UCL"/>
</dbReference>
<dbReference type="GO" id="GO:0007173">
    <property type="term" value="P:epidermal growth factor receptor signaling pathway"/>
    <property type="evidence" value="ECO:0000266"/>
    <property type="project" value="RGD"/>
</dbReference>
<dbReference type="GO" id="GO:0038134">
    <property type="term" value="P:ERBB2-EGFR signaling pathway"/>
    <property type="evidence" value="ECO:0000266"/>
    <property type="project" value="RGD"/>
</dbReference>
<dbReference type="GO" id="GO:0072574">
    <property type="term" value="P:hepatocyte proliferation"/>
    <property type="evidence" value="ECO:0000314"/>
    <property type="project" value="UniProtKB"/>
</dbReference>
<dbReference type="GO" id="GO:0060749">
    <property type="term" value="P:mammary gland alveolus development"/>
    <property type="evidence" value="ECO:0000266"/>
    <property type="project" value="RGD"/>
</dbReference>
<dbReference type="GO" id="GO:0043066">
    <property type="term" value="P:negative regulation of apoptotic process"/>
    <property type="evidence" value="ECO:0000314"/>
    <property type="project" value="RGD"/>
</dbReference>
<dbReference type="GO" id="GO:0051781">
    <property type="term" value="P:positive regulation of cell division"/>
    <property type="evidence" value="ECO:0007669"/>
    <property type="project" value="UniProtKB-KW"/>
</dbReference>
<dbReference type="GO" id="GO:0008284">
    <property type="term" value="P:positive regulation of cell population proliferation"/>
    <property type="evidence" value="ECO:0000315"/>
    <property type="project" value="RGD"/>
</dbReference>
<dbReference type="GO" id="GO:0050679">
    <property type="term" value="P:positive regulation of epithelial cell proliferation"/>
    <property type="evidence" value="ECO:0000250"/>
    <property type="project" value="HGNC-UCL"/>
</dbReference>
<dbReference type="GO" id="GO:0043410">
    <property type="term" value="P:positive regulation of MAPK cascade"/>
    <property type="evidence" value="ECO:0000250"/>
    <property type="project" value="HGNC-UCL"/>
</dbReference>
<dbReference type="GO" id="GO:0045840">
    <property type="term" value="P:positive regulation of mitotic nuclear division"/>
    <property type="evidence" value="ECO:0000318"/>
    <property type="project" value="GO_Central"/>
</dbReference>
<dbReference type="GO" id="GO:0009410">
    <property type="term" value="P:response to xenobiotic stimulus"/>
    <property type="evidence" value="ECO:0000270"/>
    <property type="project" value="RGD"/>
</dbReference>
<dbReference type="FunFam" id="2.10.25.10:FF:000182">
    <property type="entry name" value="Protransforming growth factor alpha"/>
    <property type="match status" value="1"/>
</dbReference>
<dbReference type="Gene3D" id="2.10.25.10">
    <property type="entry name" value="Laminin"/>
    <property type="match status" value="1"/>
</dbReference>
<dbReference type="InterPro" id="IPR000742">
    <property type="entry name" value="EGF-like_dom"/>
</dbReference>
<dbReference type="PANTHER" id="PTHR10740:SF1">
    <property type="entry name" value="PROTRANSFORMING GROWTH FACTOR ALPHA"/>
    <property type="match status" value="1"/>
</dbReference>
<dbReference type="PANTHER" id="PTHR10740">
    <property type="entry name" value="TRANSFORMING GROWTH FACTOR ALPHA"/>
    <property type="match status" value="1"/>
</dbReference>
<dbReference type="PRINTS" id="PR00009">
    <property type="entry name" value="EGFTGF"/>
</dbReference>
<dbReference type="SUPFAM" id="SSF57196">
    <property type="entry name" value="EGF/Laminin"/>
    <property type="match status" value="1"/>
</dbReference>
<dbReference type="PROSITE" id="PS00022">
    <property type="entry name" value="EGF_1"/>
    <property type="match status" value="1"/>
</dbReference>
<dbReference type="PROSITE" id="PS01186">
    <property type="entry name" value="EGF_2"/>
    <property type="match status" value="1"/>
</dbReference>
<dbReference type="PROSITE" id="PS50026">
    <property type="entry name" value="EGF_3"/>
    <property type="match status" value="1"/>
</dbReference>
<evidence type="ECO:0000250" key="1"/>
<evidence type="ECO:0000255" key="2"/>
<evidence type="ECO:0000255" key="3">
    <source>
        <dbReference type="PROSITE-ProRule" id="PRU00076"/>
    </source>
</evidence>
<evidence type="ECO:0000305" key="4"/>
<proteinExistence type="evidence at protein level"/>
<keyword id="KW-1003">Cell membrane</keyword>
<keyword id="KW-0903">Direct protein sequencing</keyword>
<keyword id="KW-1015">Disulfide bond</keyword>
<keyword id="KW-0245">EGF-like domain</keyword>
<keyword id="KW-0325">Glycoprotein</keyword>
<keyword id="KW-0339">Growth factor</keyword>
<keyword id="KW-0449">Lipoprotein</keyword>
<keyword id="KW-0472">Membrane</keyword>
<keyword id="KW-0497">Mitogen</keyword>
<keyword id="KW-0564">Palmitate</keyword>
<keyword id="KW-1185">Reference proteome</keyword>
<keyword id="KW-0964">Secreted</keyword>
<keyword id="KW-0732">Signal</keyword>
<keyword id="KW-0812">Transmembrane</keyword>
<keyword id="KW-1133">Transmembrane helix</keyword>
<name>TGFA_RAT</name>
<reference key="1">
    <citation type="journal article" date="1985" name="Nature">
        <title>Cloning and sequence analysis of a cDNA for rat transforming growth factor-alpha.</title>
        <authorList>
            <person name="Lee D.C."/>
            <person name="Rose T.M."/>
            <person name="Webb N.R."/>
            <person name="Todaro G.J."/>
        </authorList>
    </citation>
    <scope>NUCLEOTIDE SEQUENCE [MRNA]</scope>
</reference>
<reference key="2">
    <citation type="journal article" date="1990" name="Mol. Cell. Biol.">
        <title>Characterization of the rat transforming growth factor alpha gene and identification of promoter sequences.</title>
        <authorList>
            <person name="Blasband A.J."/>
            <person name="Rogers K.T."/>
            <person name="Chen X."/>
            <person name="Azizkhan J.C."/>
            <person name="Lee D.C."/>
        </authorList>
    </citation>
    <scope>NUCLEOTIDE SEQUENCE [GENOMIC DNA / MRNA]</scope>
</reference>
<reference key="3">
    <citation type="journal article" date="1984" name="Science">
        <title>Rat transforming growth factor type 1: structure and relation to epidermal growth factor.</title>
        <authorList>
            <person name="Marquardt H."/>
            <person name="Hunkapiller M.W."/>
            <person name="Hood L.E."/>
            <person name="Todaro G.J."/>
        </authorList>
    </citation>
    <scope>PROTEIN SEQUENCE OF 39-88</scope>
</reference>
<reference key="4">
    <citation type="journal article" date="1983" name="J. Biol. Chem.">
        <title>Epidermal growth factor-like transforming growth factor. I. Isolation, chemical characterization, and potentiation by other transforming factors from feline sarcoma virus-transformed rat cells.</title>
        <authorList>
            <person name="Massague J."/>
        </authorList>
    </citation>
    <scope>PROTEIN SEQUENCE OF 39-67</scope>
</reference>
<protein>
    <recommendedName>
        <fullName>Protransforming growth factor alpha</fullName>
    </recommendedName>
    <component>
        <recommendedName>
            <fullName>Transforming growth factor alpha</fullName>
            <shortName>TGF-alpha</shortName>
        </recommendedName>
        <alternativeName>
            <fullName>EGF-like TGF</fullName>
            <shortName>ETGF</shortName>
        </alternativeName>
        <alternativeName>
            <fullName>TGF type 1</fullName>
        </alternativeName>
    </component>
</protein>
<sequence length="159" mass="16960">MVPAAGQLALLALGILVAVCQALENSTSPLSDSPVAAAVVSHFNKCPDSHTQYCFHGTCRFLVQEEKPACVCHSGYVGVRCEHADLLAVVAASQKKQAITALVVVSIVALAVLIITCVLIHCCQVRKHCEWCRALVCRHEKPSALLKGRTACCHSETVV</sequence>
<organism>
    <name type="scientific">Rattus norvegicus</name>
    <name type="common">Rat</name>
    <dbReference type="NCBI Taxonomy" id="10116"/>
    <lineage>
        <taxon>Eukaryota</taxon>
        <taxon>Metazoa</taxon>
        <taxon>Chordata</taxon>
        <taxon>Craniata</taxon>
        <taxon>Vertebrata</taxon>
        <taxon>Euteleostomi</taxon>
        <taxon>Mammalia</taxon>
        <taxon>Eutheria</taxon>
        <taxon>Euarchontoglires</taxon>
        <taxon>Glires</taxon>
        <taxon>Rodentia</taxon>
        <taxon>Myomorpha</taxon>
        <taxon>Muroidea</taxon>
        <taxon>Muridae</taxon>
        <taxon>Murinae</taxon>
        <taxon>Rattus</taxon>
    </lineage>
</organism>